<gene>
    <name type="ordered locus">0.3</name>
</gene>
<comment type="function">
    <text evidence="1 2 4 5 6 7">Prevents both degradation and modification of T7 DNA by the host restriction-modification complex (PubMed:1095770, PubMed:32039758). Structural mimic of the phosphate backbone of B-form DNA that binds to and completely occupies the DNA-binding sites of all known families of the complex type I DNA restriction enzymes (PubMed:12235377, PubMed:32483229). Thereby, inhibits the restriction endonuclease activity and protects the phage genome as it penetrates into host cytoplasm (PubMed:12235377, PubMed:32483229). Inhibits host transcription by binding to the bacterial RNAP and competing with sigma factors (PubMed:32039758). Inhibits the host exclusion defense system BREX (PubMed:32338761, PubMed:38989624).</text>
</comment>
<comment type="subunit">
    <text evidence="2 3 4 5 6 7 8">Homodimer (PubMed:32039758, PubMed:6257722). Interacts with HsdM (AC P08957), the M subunit of host type I methyltransferase restriction enzyme M.EcoKI; 1 Ocr dimer binds to M.EcoKI (PubMed:12235377, PubMed:19074193). Interacts with HsdR (AC P08956), the R subunit of host type I bifunctional endonuclease and methyltransferase restriction enzyme R.EcoKI; 2 Ocr dimers binds to R.EcoKI (PubMed:12235377, PubMed:32483229). Interacts with host PglX/BrxX (AC P0DUF9); this interaction inhibits the enzymatic activity of PglX/BrxX through high-affinity binding (PubMed:32338761, PubMed:38989624). Forms a 2:2 tetrameric complex with phage T7 OCR (PubMed:38989624).</text>
</comment>
<sequence length="117" mass="13809">MAMSNMTYNNVFDHAYEMLKENIRYDDIRDTDDLHDAIHMAADNAVPHYYADIFSVMASEGIDLEFEDSGLMPDTKDVIRILQARIYEQLTIDLWEDAEDLLNEYLEEVEEYEEDEE</sequence>
<proteinExistence type="evidence at protein level"/>
<accession>P03775</accession>
<keyword id="KW-0002">3D-structure</keyword>
<keyword id="KW-0244">Early protein</keyword>
<keyword id="KW-0945">Host-virus interaction</keyword>
<keyword id="KW-1090">Inhibition of host innate immune response by virus</keyword>
<keyword id="KW-1185">Reference proteome</keyword>
<keyword id="KW-1258">Restriction-modification system evasion by virus</keyword>
<keyword id="KW-0899">Viral immunoevasion</keyword>
<reference key="1">
    <citation type="journal article" date="1983" name="J. Mol. Biol.">
        <title>Complete nucleotide sequence of bacteriophage T7 DNA and the locations of T7 genetic elements.</title>
        <authorList>
            <person name="Dunn J.J."/>
            <person name="Studier F.W."/>
        </authorList>
    </citation>
    <scope>NUCLEOTIDE SEQUENCE [LARGE SCALE GENOMIC DNA]</scope>
</reference>
<reference key="2">
    <citation type="journal article" date="1981" name="J. Mol. Biol.">
        <title>Nucleotide sequence from the genetic left end of bacteriophage T7 DNA to the beginning of gene 4.</title>
        <authorList>
            <person name="Dunn J.J."/>
            <person name="Studier F.W."/>
        </authorList>
    </citation>
    <scope>NUCLEOTIDE SEQUENCE [GENOMIC DNA]</scope>
</reference>
<reference key="3">
    <citation type="journal article" date="1980" name="Bioorg. Khim.">
        <title>Nucleotide sequence of gene 0.3 of bacteriophage T7.</title>
        <authorList>
            <person name="Korobko V.G."/>
            <person name="Chuvpilo S.A."/>
            <person name="Kolosov M.N."/>
        </authorList>
    </citation>
    <scope>NUCLEOTIDE SEQUENCE [GENOMIC DNA]</scope>
</reference>
<reference key="4">
    <citation type="journal article" date="1981" name="J. Biol. Chem.">
        <title>Amino acid sequence of the gene 0.3 protein of bacteriophage T7 and nucleotide sequence of its mRNA.</title>
        <authorList>
            <person name="Dunn J.J."/>
            <person name="Elzinga M."/>
            <person name="Mark K.-K."/>
            <person name="Studier F.W."/>
        </authorList>
    </citation>
    <scope>NUCLEOTIDE SEQUENCE [GENOMIC DNA]</scope>
</reference>
<reference key="5">
    <citation type="journal article" date="1981" name="J. Biol. Chem.">
        <title>Purification of the gene 0.3 protein of bacteriophage T7, an inhibitor of the DNA restriction system of Escherichia coli.</title>
        <authorList>
            <person name="Mark K.K."/>
            <person name="Studier F.W."/>
        </authorList>
    </citation>
    <scope>SUBUNIT</scope>
</reference>
<reference key="6">
    <citation type="journal article" date="1975" name="J. Mol. Biol.">
        <title>Gene 0.3 of bacteriophage T7 acts to overcome the DNA restriction system of the host.</title>
        <authorList>
            <person name="Studier F.W."/>
        </authorList>
    </citation>
    <scope>FUNCTION</scope>
</reference>
<reference key="7">
    <citation type="journal article" date="2002" name="Nucleic Acids Res.">
        <title>Interaction of the ocr gene 0.3 protein of bacteriophage T7 with EcoKI restriction/modification enzyme.</title>
        <authorList>
            <person name="Atanasiu C."/>
            <person name="Su T.J."/>
            <person name="Sturrock S.S."/>
            <person name="Dryden D.T."/>
        </authorList>
    </citation>
    <scope>FUNCTION</scope>
    <scope>INTERACTION WITH HOST HSDM</scope>
    <scope>INTERACTION WITH HOST HSDR</scope>
</reference>
<reference key="8">
    <citation type="journal article" date="2020" name="Nucleic Acids Res.">
        <title>Phage T7 DNA mimic protein Ocr is a potent inhibitor of BREX defence.</title>
        <authorList>
            <person name="Isaev A."/>
            <person name="Drobiazko A."/>
            <person name="Sierro N."/>
            <person name="Gordeeva J."/>
            <person name="Yosef I."/>
            <person name="Qimron U."/>
            <person name="Ivanov N.V."/>
            <person name="Severinov K."/>
        </authorList>
    </citation>
    <scope>FUNCTION</scope>
    <scope>INTERACTION WITH HOST PGLX/BRXX</scope>
    <scope>MUTAGENESIS OF PHE-54 AND ALA-58</scope>
</reference>
<reference evidence="11" key="9">
    <citation type="journal article" date="2002" name="Mol. Cell">
        <title>Structure of Ocr from bacteriophage T7, a protein that mimics B-form DNA.</title>
        <authorList>
            <person name="Walkinshaw M.D."/>
            <person name="Taylor P."/>
            <person name="Sturrock S.S."/>
            <person name="Atanasiu C."/>
            <person name="Berge T."/>
            <person name="Henderson R.M."/>
            <person name="Edwardson J.M."/>
            <person name="Dryden D.T."/>
        </authorList>
    </citation>
    <scope>X-RAY CRYSTALLOGRAPHY (1.83 ANGSTROMS)</scope>
</reference>
<reference evidence="12" key="10">
    <citation type="journal article" date="2009" name="Nucleic Acids Res.">
        <title>The structure of M.EcoKI Type I DNA methyltransferase with a DNA mimic antirestriction protein.</title>
        <authorList>
            <person name="Kennaway C.K."/>
            <person name="Obarska-Kosinska A."/>
            <person name="White J.H."/>
            <person name="Tuszynska I."/>
            <person name="Cooper L.P."/>
            <person name="Bujnicki J.M."/>
            <person name="Trinick J."/>
            <person name="Dryden D.T."/>
        </authorList>
    </citation>
    <scope>STRUCTURE BY ELECTRON MICROSCOPY (18.0 ANGSTROMS) OF 1-116 IN COMPLEX WITH THE HOST TYPE I RESTRICTION-MODIFICATION METHYLASE COMPLEX ECOKI (M2S1)</scope>
    <scope>INTERACTION WITH HOST HSDM</scope>
</reference>
<reference evidence="13 14" key="11">
    <citation type="journal article" date="2020" name="Elife">
        <title>Structural basis of transcription inhibition by the DNA mimic protein Ocr of bacteriophage T7.</title>
        <authorList>
            <person name="Ye F."/>
            <person name="Kotta-Loizou I."/>
            <person name="Jovanovic M."/>
            <person name="Liu X."/>
            <person name="Dryden D.T."/>
            <person name="Buck M."/>
            <person name="Zhang X."/>
        </authorList>
    </citation>
    <scope>STRUCTURE BY ELECTRON MICROSCOPY (3.70 ANGSTROMS)</scope>
    <scope>SUBUNIT</scope>
    <scope>FUNCTION</scope>
</reference>
<reference evidence="15 16" key="12">
    <citation type="journal article" date="2020" name="Nat. Microbiol.">
        <title>Structural insights into assembly, operation and inhibition of a type I restriction-modification system.</title>
        <authorList>
            <person name="Gao Y."/>
            <person name="Cao D."/>
            <person name="Zhu J."/>
            <person name="Feng H."/>
            <person name="Luo X."/>
            <person name="Liu S."/>
            <person name="Yan X.X."/>
            <person name="Zhang X."/>
            <person name="Gao P."/>
        </authorList>
    </citation>
    <scope>STRUCTURE BY ELECTRON MICROSCOPY (4.01 ANGSTROMS) IN COMPLEX WITH THE HOST TYPE I RESTRICTION-MODIFICATION</scope>
    <scope>FUNCTION</scope>
    <scope>INTERACTION WITH HOST HSDR</scope>
</reference>
<reference key="13">
    <citation type="journal article" date="2024" name="Nucleic Acids Res.">
        <title>Ocr-mediated suppression of BrxX unveils a phage counter-defense mechanism.</title>
        <authorList>
            <person name="Li S."/>
            <person name="Xu T."/>
            <person name="Meng X."/>
            <person name="Yan Y."/>
            <person name="Zhou Y."/>
            <person name="Duan L."/>
            <person name="Tang Y."/>
            <person name="Zhu L."/>
            <person name="Sun L."/>
        </authorList>
    </citation>
    <scope>STRUCTURE BY ELECTRON MICROSCOPY (2.9 ANGSTROMS) IN COMPLEX WITH HOST PGLX/BRXX</scope>
    <scope>FUNCTION</scope>
    <scope>INTERACTION WITH HOST PGLX/BRXX</scope>
    <scope>SUBUNIT</scope>
</reference>
<protein>
    <recommendedName>
        <fullName evidence="9">Protein Ocr</fullName>
    </recommendedName>
    <alternativeName>
        <fullName>Gene product 0.3</fullName>
        <shortName>Gp0.3</shortName>
    </alternativeName>
    <alternativeName>
        <fullName>Overcome classical restriction</fullName>
        <shortName>Ocr</shortName>
    </alternativeName>
</protein>
<name>OCR_BPT7</name>
<evidence type="ECO:0000269" key="1">
    <source>
    </source>
</evidence>
<evidence type="ECO:0000269" key="2">
    <source>
    </source>
</evidence>
<evidence type="ECO:0000269" key="3">
    <source>
    </source>
</evidence>
<evidence type="ECO:0000269" key="4">
    <source>
    </source>
</evidence>
<evidence type="ECO:0000269" key="5">
    <source>
    </source>
</evidence>
<evidence type="ECO:0000269" key="6">
    <source>
    </source>
</evidence>
<evidence type="ECO:0000269" key="7">
    <source>
    </source>
</evidence>
<evidence type="ECO:0000269" key="8">
    <source>
    </source>
</evidence>
<evidence type="ECO:0000303" key="9">
    <source>
    </source>
</evidence>
<evidence type="ECO:0000305" key="10"/>
<evidence type="ECO:0007744" key="11">
    <source>
        <dbReference type="PDB" id="1S7Z"/>
    </source>
</evidence>
<evidence type="ECO:0007744" key="12">
    <source>
        <dbReference type="PDB" id="2Y7C"/>
    </source>
</evidence>
<evidence type="ECO:0007744" key="13">
    <source>
        <dbReference type="PDB" id="6R9B"/>
    </source>
</evidence>
<evidence type="ECO:0007744" key="14">
    <source>
        <dbReference type="PDB" id="6R9G"/>
    </source>
</evidence>
<evidence type="ECO:0007744" key="15">
    <source>
        <dbReference type="PDB" id="7BST"/>
    </source>
</evidence>
<evidence type="ECO:0007744" key="16">
    <source>
        <dbReference type="PDB" id="7BTP"/>
    </source>
</evidence>
<evidence type="ECO:0007829" key="17">
    <source>
        <dbReference type="PDB" id="1S7Z"/>
    </source>
</evidence>
<evidence type="ECO:0007829" key="18">
    <source>
        <dbReference type="PDB" id="8Q56"/>
    </source>
</evidence>
<organism>
    <name type="scientific">Escherichia phage T7</name>
    <name type="common">Bacteriophage T7</name>
    <dbReference type="NCBI Taxonomy" id="10760"/>
    <lineage>
        <taxon>Viruses</taxon>
        <taxon>Duplodnaviria</taxon>
        <taxon>Heunggongvirae</taxon>
        <taxon>Uroviricota</taxon>
        <taxon>Caudoviricetes</taxon>
        <taxon>Autographiviridae</taxon>
        <taxon>Studiervirinae</taxon>
        <taxon>Teseptimavirus</taxon>
        <taxon>Teseptimavirus T7</taxon>
    </lineage>
</organism>
<dbReference type="EMBL" id="M38334">
    <property type="protein sequence ID" value="AAA32564.1"/>
    <property type="molecule type" value="Genomic_DNA"/>
</dbReference>
<dbReference type="EMBL" id="V01146">
    <property type="protein sequence ID" value="CAA24384.1"/>
    <property type="molecule type" value="Genomic_DNA"/>
</dbReference>
<dbReference type="EMBL" id="V01127">
    <property type="protein sequence ID" value="CAA24327.1"/>
    <property type="molecule type" value="Genomic_DNA"/>
</dbReference>
<dbReference type="PIR" id="A43002">
    <property type="entry name" value="W0BP37"/>
</dbReference>
<dbReference type="RefSeq" id="NP_041954.1">
    <property type="nucleotide sequence ID" value="NC_001604.1"/>
</dbReference>
<dbReference type="PDB" id="1S7Z">
    <property type="method" value="X-ray"/>
    <property type="resolution" value="1.83 A"/>
    <property type="chains" value="A=1-117"/>
</dbReference>
<dbReference type="PDB" id="2Y7C">
    <property type="method" value="EM"/>
    <property type="resolution" value="18.00 A"/>
    <property type="chains" value="D/E=1-116"/>
</dbReference>
<dbReference type="PDB" id="6R9B">
    <property type="method" value="EM"/>
    <property type="resolution" value="3.80 A"/>
    <property type="chains" value="F/G=1-117"/>
</dbReference>
<dbReference type="PDB" id="6R9G">
    <property type="method" value="EM"/>
    <property type="resolution" value="3.70 A"/>
    <property type="chains" value="F/G=1-117"/>
</dbReference>
<dbReference type="PDB" id="7BST">
    <property type="method" value="EM"/>
    <property type="resolution" value="4.37 A"/>
    <property type="chains" value="F/G=1-117"/>
</dbReference>
<dbReference type="PDB" id="7BTP">
    <property type="method" value="EM"/>
    <property type="resolution" value="4.01 A"/>
    <property type="chains" value="D/F=1-117"/>
</dbReference>
<dbReference type="PDB" id="7EEW">
    <property type="method" value="X-ray"/>
    <property type="resolution" value="2.90 A"/>
    <property type="chains" value="B=1-117"/>
</dbReference>
<dbReference type="PDB" id="8Q56">
    <property type="method" value="X-ray"/>
    <property type="resolution" value="3.50 A"/>
    <property type="chains" value="B=1-117"/>
</dbReference>
<dbReference type="PDB" id="8V45">
    <property type="method" value="EM"/>
    <property type="resolution" value="3.63 A"/>
    <property type="chains" value="O/P=1-117"/>
</dbReference>
<dbReference type="PDB" id="8ZEK">
    <property type="method" value="EM"/>
    <property type="resolution" value="3.15 A"/>
    <property type="chains" value="B/C=1-117"/>
</dbReference>
<dbReference type="PDB" id="9EX7">
    <property type="method" value="EM"/>
    <property type="resolution" value="2.91 A"/>
    <property type="chains" value="C/D=1-117"/>
</dbReference>
<dbReference type="PDBsum" id="1S7Z"/>
<dbReference type="PDBsum" id="2Y7C"/>
<dbReference type="PDBsum" id="6R9B"/>
<dbReference type="PDBsum" id="6R9G"/>
<dbReference type="PDBsum" id="7BST"/>
<dbReference type="PDBsum" id="7BTP"/>
<dbReference type="PDBsum" id="7EEW"/>
<dbReference type="PDBsum" id="8Q56"/>
<dbReference type="PDBsum" id="8V45"/>
<dbReference type="PDBsum" id="8ZEK"/>
<dbReference type="PDBsum" id="9EX7"/>
<dbReference type="EMDB" id="EMD-1534"/>
<dbReference type="EMDB" id="EMD-30166"/>
<dbReference type="EMDB" id="EMD-30181"/>
<dbReference type="EMDB" id="EMD-42965"/>
<dbReference type="EMDB" id="EMD-4769"/>
<dbReference type="EMDB" id="EMD-4770"/>
<dbReference type="EMDB" id="EMD-50032"/>
<dbReference type="EMDB" id="EMD-60037"/>
<dbReference type="SASBDB" id="P03775"/>
<dbReference type="SMR" id="P03775"/>
<dbReference type="IntAct" id="P03775">
    <property type="interactions" value="1"/>
</dbReference>
<dbReference type="MINT" id="P03775"/>
<dbReference type="KEGG" id="vg:1261063"/>
<dbReference type="OrthoDB" id="17645at10239"/>
<dbReference type="EvolutionaryTrace" id="P03775"/>
<dbReference type="Proteomes" id="UP000000840">
    <property type="component" value="Genome"/>
</dbReference>
<dbReference type="GO" id="GO:0099018">
    <property type="term" value="P:symbiont-mediated evasion of host restriction-modification system"/>
    <property type="evidence" value="ECO:0007669"/>
    <property type="project" value="UniProtKB-KW"/>
</dbReference>
<dbReference type="GO" id="GO:0052170">
    <property type="term" value="P:symbiont-mediated suppression of host innate immune response"/>
    <property type="evidence" value="ECO:0007669"/>
    <property type="project" value="UniProtKB-KW"/>
</dbReference>
<dbReference type="Gene3D" id="1.20.120.780">
    <property type="entry name" value="DNA mimic ocr"/>
    <property type="match status" value="1"/>
</dbReference>
<dbReference type="InterPro" id="IPR036207">
    <property type="entry name" value="B-form_Ocr"/>
</dbReference>
<dbReference type="InterPro" id="IPR014798">
    <property type="entry name" value="Ocr"/>
</dbReference>
<dbReference type="Pfam" id="PF08684">
    <property type="entry name" value="ocr"/>
    <property type="match status" value="1"/>
</dbReference>
<dbReference type="SUPFAM" id="SSF101059">
    <property type="entry name" value="B-form DNA mimic Ocr"/>
    <property type="match status" value="1"/>
</dbReference>
<organismHost>
    <name type="scientific">Escherichia coli</name>
    <dbReference type="NCBI Taxonomy" id="562"/>
</organismHost>
<feature type="chain" id="PRO_0000106462" description="Protein Ocr">
    <location>
        <begin position="1"/>
        <end position="117"/>
    </location>
</feature>
<feature type="mutagenesis site" description="Partial loss of inhibition of the host exclusion defense system BREX; when associated with E-58." evidence="5">
    <original>F</original>
    <variation>D</variation>
    <location>
        <position position="54"/>
    </location>
</feature>
<feature type="mutagenesis site" description="Partial loss of inhibition of the host exclusion defense system BREX; when associated with D-54." evidence="5">
    <original>A</original>
    <variation>E</variation>
    <location>
        <position position="58"/>
    </location>
</feature>
<feature type="sequence conflict" description="In Ref. 3; AAA32564." evidence="10" ref="3">
    <original>D</original>
    <variation>S</variation>
    <location>
        <position position="43"/>
    </location>
</feature>
<feature type="helix" evidence="17">
    <location>
        <begin position="8"/>
        <end position="25"/>
    </location>
</feature>
<feature type="helix" evidence="17">
    <location>
        <begin position="31"/>
        <end position="33"/>
    </location>
</feature>
<feature type="helix" evidence="17">
    <location>
        <begin position="35"/>
        <end position="45"/>
    </location>
</feature>
<feature type="helix" evidence="17">
    <location>
        <begin position="50"/>
        <end position="57"/>
    </location>
</feature>
<feature type="helix" evidence="17">
    <location>
        <begin position="69"/>
        <end position="71"/>
    </location>
</feature>
<feature type="helix" evidence="17">
    <location>
        <begin position="78"/>
        <end position="96"/>
    </location>
</feature>
<feature type="helix" evidence="17">
    <location>
        <begin position="98"/>
        <end position="106"/>
    </location>
</feature>
<feature type="turn" evidence="18">
    <location>
        <begin position="107"/>
        <end position="109"/>
    </location>
</feature>